<organism>
    <name type="scientific">Shewanella baltica (strain OS155 / ATCC BAA-1091)</name>
    <dbReference type="NCBI Taxonomy" id="325240"/>
    <lineage>
        <taxon>Bacteria</taxon>
        <taxon>Pseudomonadati</taxon>
        <taxon>Pseudomonadota</taxon>
        <taxon>Gammaproteobacteria</taxon>
        <taxon>Alteromonadales</taxon>
        <taxon>Shewanellaceae</taxon>
        <taxon>Shewanella</taxon>
    </lineage>
</organism>
<dbReference type="EC" id="1.1.1.25" evidence="1"/>
<dbReference type="EMBL" id="CP000563">
    <property type="protein sequence ID" value="ABN59576.1"/>
    <property type="molecule type" value="Genomic_DNA"/>
</dbReference>
<dbReference type="RefSeq" id="WP_011845359.1">
    <property type="nucleotide sequence ID" value="NC_009052.1"/>
</dbReference>
<dbReference type="SMR" id="A3CYL3"/>
<dbReference type="STRING" id="325240.Sbal_0040"/>
<dbReference type="KEGG" id="sbl:Sbal_0040"/>
<dbReference type="HOGENOM" id="CLU_044063_2_1_6"/>
<dbReference type="OrthoDB" id="9776868at2"/>
<dbReference type="UniPathway" id="UPA00053">
    <property type="reaction ID" value="UER00087"/>
</dbReference>
<dbReference type="Proteomes" id="UP000001557">
    <property type="component" value="Chromosome"/>
</dbReference>
<dbReference type="GO" id="GO:0005829">
    <property type="term" value="C:cytosol"/>
    <property type="evidence" value="ECO:0007669"/>
    <property type="project" value="TreeGrafter"/>
</dbReference>
<dbReference type="GO" id="GO:0050661">
    <property type="term" value="F:NADP binding"/>
    <property type="evidence" value="ECO:0007669"/>
    <property type="project" value="InterPro"/>
</dbReference>
<dbReference type="GO" id="GO:0004764">
    <property type="term" value="F:shikimate 3-dehydrogenase (NADP+) activity"/>
    <property type="evidence" value="ECO:0007669"/>
    <property type="project" value="UniProtKB-UniRule"/>
</dbReference>
<dbReference type="GO" id="GO:0008652">
    <property type="term" value="P:amino acid biosynthetic process"/>
    <property type="evidence" value="ECO:0007669"/>
    <property type="project" value="UniProtKB-KW"/>
</dbReference>
<dbReference type="GO" id="GO:0009073">
    <property type="term" value="P:aromatic amino acid family biosynthetic process"/>
    <property type="evidence" value="ECO:0007669"/>
    <property type="project" value="UniProtKB-KW"/>
</dbReference>
<dbReference type="GO" id="GO:0009423">
    <property type="term" value="P:chorismate biosynthetic process"/>
    <property type="evidence" value="ECO:0007669"/>
    <property type="project" value="UniProtKB-UniRule"/>
</dbReference>
<dbReference type="GO" id="GO:0019632">
    <property type="term" value="P:shikimate metabolic process"/>
    <property type="evidence" value="ECO:0007669"/>
    <property type="project" value="InterPro"/>
</dbReference>
<dbReference type="CDD" id="cd01065">
    <property type="entry name" value="NAD_bind_Shikimate_DH"/>
    <property type="match status" value="1"/>
</dbReference>
<dbReference type="FunFam" id="3.40.50.10860:FF:000006">
    <property type="entry name" value="Shikimate dehydrogenase (NADP(+))"/>
    <property type="match status" value="1"/>
</dbReference>
<dbReference type="FunFam" id="3.40.50.720:FF:000104">
    <property type="entry name" value="Shikimate dehydrogenase (NADP(+))"/>
    <property type="match status" value="1"/>
</dbReference>
<dbReference type="Gene3D" id="3.40.50.10860">
    <property type="entry name" value="Leucine Dehydrogenase, chain A, domain 1"/>
    <property type="match status" value="1"/>
</dbReference>
<dbReference type="Gene3D" id="3.40.50.720">
    <property type="entry name" value="NAD(P)-binding Rossmann-like Domain"/>
    <property type="match status" value="1"/>
</dbReference>
<dbReference type="HAMAP" id="MF_00222">
    <property type="entry name" value="Shikimate_DH_AroE"/>
    <property type="match status" value="1"/>
</dbReference>
<dbReference type="InterPro" id="IPR046346">
    <property type="entry name" value="Aminoacid_DH-like_N_sf"/>
</dbReference>
<dbReference type="InterPro" id="IPR036291">
    <property type="entry name" value="NAD(P)-bd_dom_sf"/>
</dbReference>
<dbReference type="InterPro" id="IPR041121">
    <property type="entry name" value="SDH_C"/>
</dbReference>
<dbReference type="InterPro" id="IPR011342">
    <property type="entry name" value="Shikimate_DH"/>
</dbReference>
<dbReference type="InterPro" id="IPR013708">
    <property type="entry name" value="Shikimate_DH-bd_N"/>
</dbReference>
<dbReference type="InterPro" id="IPR022893">
    <property type="entry name" value="Shikimate_DH_fam"/>
</dbReference>
<dbReference type="InterPro" id="IPR006151">
    <property type="entry name" value="Shikm_DH/Glu-tRNA_Rdtase"/>
</dbReference>
<dbReference type="NCBIfam" id="TIGR00507">
    <property type="entry name" value="aroE"/>
    <property type="match status" value="1"/>
</dbReference>
<dbReference type="NCBIfam" id="NF001310">
    <property type="entry name" value="PRK00258.1-2"/>
    <property type="match status" value="1"/>
</dbReference>
<dbReference type="PANTHER" id="PTHR21089:SF1">
    <property type="entry name" value="BIFUNCTIONAL 3-DEHYDROQUINATE DEHYDRATASE_SHIKIMATE DEHYDROGENASE, CHLOROPLASTIC"/>
    <property type="match status" value="1"/>
</dbReference>
<dbReference type="PANTHER" id="PTHR21089">
    <property type="entry name" value="SHIKIMATE DEHYDROGENASE"/>
    <property type="match status" value="1"/>
</dbReference>
<dbReference type="Pfam" id="PF18317">
    <property type="entry name" value="SDH_C"/>
    <property type="match status" value="1"/>
</dbReference>
<dbReference type="Pfam" id="PF01488">
    <property type="entry name" value="Shikimate_DH"/>
    <property type="match status" value="1"/>
</dbReference>
<dbReference type="Pfam" id="PF08501">
    <property type="entry name" value="Shikimate_dh_N"/>
    <property type="match status" value="1"/>
</dbReference>
<dbReference type="SUPFAM" id="SSF53223">
    <property type="entry name" value="Aminoacid dehydrogenase-like, N-terminal domain"/>
    <property type="match status" value="1"/>
</dbReference>
<dbReference type="SUPFAM" id="SSF51735">
    <property type="entry name" value="NAD(P)-binding Rossmann-fold domains"/>
    <property type="match status" value="1"/>
</dbReference>
<sequence length="282" mass="29652">MTDRYAVFGNPISHSKSPFIHGQFAAPTQESLTYEAILAPVDGFEASLTAFFNAGGKGANVTVPFKEQAFALCDSISPEAKLAGAVNTLSLLADGTIRGDNTDGLGLVADLIANLGSLQDKRVLLIGAGGAARGCILPLLNAGIAQLIISNRTHTKAQLLVDIFTSVDNGAFANRVTAVEMNELAGEFDIIINSTSASLVGELPPLPTHIITTQTVCYDMMYGASVTAFNQWALSQGAAKVIDGLGMLVGQAAKSFTLWRGIEPDTQVVLTLLRDKLMAEPK</sequence>
<feature type="chain" id="PRO_0000325162" description="Shikimate dehydrogenase (NADP(+))">
    <location>
        <begin position="1"/>
        <end position="282"/>
    </location>
</feature>
<feature type="active site" description="Proton acceptor" evidence="1">
    <location>
        <position position="66"/>
    </location>
</feature>
<feature type="binding site" evidence="1">
    <location>
        <begin position="15"/>
        <end position="17"/>
    </location>
    <ligand>
        <name>shikimate</name>
        <dbReference type="ChEBI" id="CHEBI:36208"/>
    </ligand>
</feature>
<feature type="binding site" evidence="1">
    <location>
        <position position="62"/>
    </location>
    <ligand>
        <name>shikimate</name>
        <dbReference type="ChEBI" id="CHEBI:36208"/>
    </ligand>
</feature>
<feature type="binding site" evidence="1">
    <location>
        <position position="87"/>
    </location>
    <ligand>
        <name>shikimate</name>
        <dbReference type="ChEBI" id="CHEBI:36208"/>
    </ligand>
</feature>
<feature type="binding site" evidence="1">
    <location>
        <position position="103"/>
    </location>
    <ligand>
        <name>shikimate</name>
        <dbReference type="ChEBI" id="CHEBI:36208"/>
    </ligand>
</feature>
<feature type="binding site" evidence="1">
    <location>
        <begin position="127"/>
        <end position="131"/>
    </location>
    <ligand>
        <name>NADP(+)</name>
        <dbReference type="ChEBI" id="CHEBI:58349"/>
    </ligand>
</feature>
<feature type="binding site" evidence="1">
    <location>
        <begin position="151"/>
        <end position="156"/>
    </location>
    <ligand>
        <name>NADP(+)</name>
        <dbReference type="ChEBI" id="CHEBI:58349"/>
    </ligand>
</feature>
<feature type="binding site" evidence="1">
    <location>
        <position position="220"/>
    </location>
    <ligand>
        <name>NADP(+)</name>
        <dbReference type="ChEBI" id="CHEBI:58349"/>
    </ligand>
</feature>
<feature type="binding site" evidence="1">
    <location>
        <position position="222"/>
    </location>
    <ligand>
        <name>shikimate</name>
        <dbReference type="ChEBI" id="CHEBI:36208"/>
    </ligand>
</feature>
<feature type="binding site" evidence="1">
    <location>
        <position position="244"/>
    </location>
    <ligand>
        <name>NADP(+)</name>
        <dbReference type="ChEBI" id="CHEBI:58349"/>
    </ligand>
</feature>
<evidence type="ECO:0000255" key="1">
    <source>
        <dbReference type="HAMAP-Rule" id="MF_00222"/>
    </source>
</evidence>
<gene>
    <name evidence="1" type="primary">aroE</name>
    <name type="ordered locus">Sbal_0040</name>
</gene>
<name>AROE_SHEB5</name>
<keyword id="KW-0028">Amino-acid biosynthesis</keyword>
<keyword id="KW-0057">Aromatic amino acid biosynthesis</keyword>
<keyword id="KW-0521">NADP</keyword>
<keyword id="KW-0560">Oxidoreductase</keyword>
<keyword id="KW-1185">Reference proteome</keyword>
<accession>A3CYL3</accession>
<protein>
    <recommendedName>
        <fullName evidence="1">Shikimate dehydrogenase (NADP(+))</fullName>
        <shortName evidence="1">SDH</shortName>
        <ecNumber evidence="1">1.1.1.25</ecNumber>
    </recommendedName>
</protein>
<comment type="function">
    <text evidence="1">Involved in the biosynthesis of the chorismate, which leads to the biosynthesis of aromatic amino acids. Catalyzes the reversible NADPH linked reduction of 3-dehydroshikimate (DHSA) to yield shikimate (SA).</text>
</comment>
<comment type="catalytic activity">
    <reaction evidence="1">
        <text>shikimate + NADP(+) = 3-dehydroshikimate + NADPH + H(+)</text>
        <dbReference type="Rhea" id="RHEA:17737"/>
        <dbReference type="ChEBI" id="CHEBI:15378"/>
        <dbReference type="ChEBI" id="CHEBI:16630"/>
        <dbReference type="ChEBI" id="CHEBI:36208"/>
        <dbReference type="ChEBI" id="CHEBI:57783"/>
        <dbReference type="ChEBI" id="CHEBI:58349"/>
        <dbReference type="EC" id="1.1.1.25"/>
    </reaction>
</comment>
<comment type="pathway">
    <text evidence="1">Metabolic intermediate biosynthesis; chorismate biosynthesis; chorismate from D-erythrose 4-phosphate and phosphoenolpyruvate: step 4/7.</text>
</comment>
<comment type="subunit">
    <text evidence="1">Homodimer.</text>
</comment>
<comment type="similarity">
    <text evidence="1">Belongs to the shikimate dehydrogenase family.</text>
</comment>
<reference key="1">
    <citation type="submission" date="2007-02" db="EMBL/GenBank/DDBJ databases">
        <title>Complete sequence of chromosome of Shewanella baltica OS155.</title>
        <authorList>
            <consortium name="US DOE Joint Genome Institute"/>
            <person name="Copeland A."/>
            <person name="Lucas S."/>
            <person name="Lapidus A."/>
            <person name="Barry K."/>
            <person name="Detter J.C."/>
            <person name="Glavina del Rio T."/>
            <person name="Hammon N."/>
            <person name="Israni S."/>
            <person name="Dalin E."/>
            <person name="Tice H."/>
            <person name="Pitluck S."/>
            <person name="Sims D.R."/>
            <person name="Brettin T."/>
            <person name="Bruce D."/>
            <person name="Han C."/>
            <person name="Tapia R."/>
            <person name="Brainard J."/>
            <person name="Schmutz J."/>
            <person name="Larimer F."/>
            <person name="Land M."/>
            <person name="Hauser L."/>
            <person name="Kyrpides N."/>
            <person name="Mikhailova N."/>
            <person name="Brettar I."/>
            <person name="Klappenbach J."/>
            <person name="Konstantinidis K."/>
            <person name="Rodrigues J."/>
            <person name="Tiedje J."/>
            <person name="Richardson P."/>
        </authorList>
    </citation>
    <scope>NUCLEOTIDE SEQUENCE [LARGE SCALE GENOMIC DNA]</scope>
    <source>
        <strain>OS155 / ATCC BAA-1091</strain>
    </source>
</reference>
<proteinExistence type="inferred from homology"/>